<protein>
    <recommendedName>
        <fullName evidence="1">Large ribosomal subunit protein uL30</fullName>
    </recommendedName>
    <alternativeName>
        <fullName evidence="2">50S ribosomal protein L30</fullName>
    </alternativeName>
</protein>
<accession>Q9HIS8</accession>
<dbReference type="EMBL" id="AL445067">
    <property type="protein sequence ID" value="CAC12374.1"/>
    <property type="status" value="ALT_INIT"/>
    <property type="molecule type" value="Genomic_DNA"/>
</dbReference>
<dbReference type="RefSeq" id="WP_010901657.1">
    <property type="nucleotide sequence ID" value="NC_002578.1"/>
</dbReference>
<dbReference type="SMR" id="Q9HIS8"/>
<dbReference type="FunCoup" id="Q9HIS8">
    <property type="interactions" value="159"/>
</dbReference>
<dbReference type="STRING" id="273075.gene:9572473"/>
<dbReference type="PaxDb" id="273075-Ta1250m"/>
<dbReference type="EnsemblBacteria" id="CAC12374">
    <property type="protein sequence ID" value="CAC12374"/>
    <property type="gene ID" value="CAC12374"/>
</dbReference>
<dbReference type="KEGG" id="tac:Ta1250"/>
<dbReference type="eggNOG" id="arCOG04086">
    <property type="taxonomic scope" value="Archaea"/>
</dbReference>
<dbReference type="HOGENOM" id="CLU_055156_6_0_2"/>
<dbReference type="InParanoid" id="Q9HIS8"/>
<dbReference type="OrthoDB" id="6379at2157"/>
<dbReference type="Proteomes" id="UP000001024">
    <property type="component" value="Chromosome"/>
</dbReference>
<dbReference type="GO" id="GO:0022625">
    <property type="term" value="C:cytosolic large ribosomal subunit"/>
    <property type="evidence" value="ECO:0007669"/>
    <property type="project" value="TreeGrafter"/>
</dbReference>
<dbReference type="GO" id="GO:0003723">
    <property type="term" value="F:RNA binding"/>
    <property type="evidence" value="ECO:0007669"/>
    <property type="project" value="TreeGrafter"/>
</dbReference>
<dbReference type="GO" id="GO:0003735">
    <property type="term" value="F:structural constituent of ribosome"/>
    <property type="evidence" value="ECO:0007669"/>
    <property type="project" value="InterPro"/>
</dbReference>
<dbReference type="GO" id="GO:0000463">
    <property type="term" value="P:maturation of LSU-rRNA from tricistronic rRNA transcript (SSU-rRNA, 5.8S rRNA, LSU-rRNA)"/>
    <property type="evidence" value="ECO:0007669"/>
    <property type="project" value="TreeGrafter"/>
</dbReference>
<dbReference type="GO" id="GO:0006412">
    <property type="term" value="P:translation"/>
    <property type="evidence" value="ECO:0007669"/>
    <property type="project" value="UniProtKB-UniRule"/>
</dbReference>
<dbReference type="CDD" id="cd01657">
    <property type="entry name" value="Ribosomal_L7_archeal_euk"/>
    <property type="match status" value="1"/>
</dbReference>
<dbReference type="Gene3D" id="1.10.15.30">
    <property type="match status" value="1"/>
</dbReference>
<dbReference type="Gene3D" id="3.30.1390.20">
    <property type="entry name" value="Ribosomal protein L30, ferredoxin-like fold domain"/>
    <property type="match status" value="1"/>
</dbReference>
<dbReference type="HAMAP" id="MF_01371_A">
    <property type="entry name" value="Ribosomal_uL30_A"/>
    <property type="match status" value="1"/>
</dbReference>
<dbReference type="InterPro" id="IPR036919">
    <property type="entry name" value="Ribo_uL30_ferredoxin-like_sf"/>
</dbReference>
<dbReference type="InterPro" id="IPR039699">
    <property type="entry name" value="Ribosomal_uL30"/>
</dbReference>
<dbReference type="InterPro" id="IPR005997">
    <property type="entry name" value="Ribosomal_uL30_arc"/>
</dbReference>
<dbReference type="InterPro" id="IPR035808">
    <property type="entry name" value="Ribosomal_uL30_euk_arc"/>
</dbReference>
<dbReference type="InterPro" id="IPR016082">
    <property type="entry name" value="Ribosomal_uL30_ferredoxin-like"/>
</dbReference>
<dbReference type="NCBIfam" id="NF004711">
    <property type="entry name" value="PRK06049.1"/>
    <property type="match status" value="1"/>
</dbReference>
<dbReference type="NCBIfam" id="TIGR01309">
    <property type="entry name" value="uL30_arch"/>
    <property type="match status" value="1"/>
</dbReference>
<dbReference type="PANTHER" id="PTHR11524">
    <property type="entry name" value="60S RIBOSOMAL PROTEIN L7"/>
    <property type="match status" value="1"/>
</dbReference>
<dbReference type="PANTHER" id="PTHR11524:SF16">
    <property type="entry name" value="LARGE RIBOSOMAL SUBUNIT PROTEIN UL30"/>
    <property type="match status" value="1"/>
</dbReference>
<dbReference type="Pfam" id="PF00327">
    <property type="entry name" value="Ribosomal_L30"/>
    <property type="match status" value="1"/>
</dbReference>
<dbReference type="SUPFAM" id="SSF55129">
    <property type="entry name" value="Ribosomal protein L30p/L7e"/>
    <property type="match status" value="1"/>
</dbReference>
<feature type="chain" id="PRO_0000273916" description="Large ribosomal subunit protein uL30">
    <location>
        <begin position="1"/>
        <end position="165"/>
    </location>
</feature>
<evidence type="ECO:0000255" key="1">
    <source>
        <dbReference type="HAMAP-Rule" id="MF_01371"/>
    </source>
</evidence>
<evidence type="ECO:0000305" key="2"/>
<keyword id="KW-1185">Reference proteome</keyword>
<keyword id="KW-0687">Ribonucleoprotein</keyword>
<keyword id="KW-0689">Ribosomal protein</keyword>
<sequence length="165" mass="18711">MLAVIRIRGRTGIKEDIADTAHLMRLNRINHLVLLNENEVVKGMLQKVKDYVTWGEIDLDTLELLLKNRLLFRGRKHLTEEELKEKTGFTSYRDLAQALIDGKIKPSEIADAVPVIRLNPPKGGYEAIRKSYRSGGSSGYRGSDINQLIRRMIISGVDLNGKREN</sequence>
<gene>
    <name evidence="1" type="primary">rpl30</name>
    <name type="ordered locus">Ta1250</name>
</gene>
<name>RL30_THEAC</name>
<comment type="subunit">
    <text evidence="1">Part of the 50S ribosomal subunit.</text>
</comment>
<comment type="similarity">
    <text evidence="1">Belongs to the universal ribosomal protein uL30 family.</text>
</comment>
<comment type="sequence caution" evidence="2">
    <conflict type="erroneous initiation">
        <sequence resource="EMBL-CDS" id="CAC12374"/>
    </conflict>
    <text>Truncated N-terminus.</text>
</comment>
<organism>
    <name type="scientific">Thermoplasma acidophilum (strain ATCC 25905 / DSM 1728 / JCM 9062 / NBRC 15155 / AMRC-C165)</name>
    <dbReference type="NCBI Taxonomy" id="273075"/>
    <lineage>
        <taxon>Archaea</taxon>
        <taxon>Methanobacteriati</taxon>
        <taxon>Thermoplasmatota</taxon>
        <taxon>Thermoplasmata</taxon>
        <taxon>Thermoplasmatales</taxon>
        <taxon>Thermoplasmataceae</taxon>
        <taxon>Thermoplasma</taxon>
    </lineage>
</organism>
<reference key="1">
    <citation type="journal article" date="2000" name="Nature">
        <title>The genome sequence of the thermoacidophilic scavenger Thermoplasma acidophilum.</title>
        <authorList>
            <person name="Ruepp A."/>
            <person name="Graml W."/>
            <person name="Santos-Martinez M.-L."/>
            <person name="Koretke K.K."/>
            <person name="Volker C."/>
            <person name="Mewes H.-W."/>
            <person name="Frishman D."/>
            <person name="Stocker S."/>
            <person name="Lupas A.N."/>
            <person name="Baumeister W."/>
        </authorList>
    </citation>
    <scope>NUCLEOTIDE SEQUENCE [LARGE SCALE GENOMIC DNA]</scope>
    <source>
        <strain>ATCC 25905 / DSM 1728 / JCM 9062 / NBRC 15155 / AMRC-C165</strain>
    </source>
</reference>
<proteinExistence type="inferred from homology"/>